<organism>
    <name type="scientific">Arthroderma benhamiae (strain ATCC MYA-4681 / CBS 112371)</name>
    <name type="common">Trichophyton mentagrophytes</name>
    <dbReference type="NCBI Taxonomy" id="663331"/>
    <lineage>
        <taxon>Eukaryota</taxon>
        <taxon>Fungi</taxon>
        <taxon>Dikarya</taxon>
        <taxon>Ascomycota</taxon>
        <taxon>Pezizomycotina</taxon>
        <taxon>Eurotiomycetes</taxon>
        <taxon>Eurotiomycetidae</taxon>
        <taxon>Onygenales</taxon>
        <taxon>Arthrodermataceae</taxon>
        <taxon>Trichophyton</taxon>
    </lineage>
</organism>
<protein>
    <recommendedName>
        <fullName evidence="6">Exo-beta-D-glucosaminidase ARB_07888</fullName>
        <ecNumber evidence="1">3.2.1.165</ecNumber>
    </recommendedName>
</protein>
<proteinExistence type="evidence at protein level"/>
<sequence length="882" mass="99868">MWFVFRPAAIPALLLTLGVSALSPLRPLVSTAGQHEVIPGWYLQSERHVSSSIFSLSFPGADVSSWYRMGPRGTVMAGLLENGVYNETHLFFSDNFKSLPDADFRDVSWLYREEFTLQPGSGQHFTLHTHGISSRGDIYLNGHRVASKDVQAGSYAGYQYDVTKHVLKGGNCLLIKAYPTNYLRDLALGFVDWNPYPPDNGTGIWRHVELSQSGPIRLSSPRVTTDFVPGVRVNDTNLTVKTDVHNIGQETIRGSIKGFIEGAQNQRQPISAPFTLKPGEQQTIEMNTTIQNPSVWWPASWGDQPLYTARISAFVGKIKSDGPKRRKFGIRHIESRVNDQDTVEFKVNGKPFFVMGAGYSSDIFLRFTVERITTIFQYVLDMGMNTVRLEGKQEHPELYDIADKMGIMIISGWECCDHWEGWKYNTEGFGQPWTDVDYPIANSSMLHEARMMQTHPSILAFLIGSDYWPNDQATNIYVDALRRMDWNAAIISSAAKRGFPKLLGPSGMKMDGPYDWVPPSYWFGDRLGAAGAGGFGSELGSGVGTPEIRSLKKFLSEEDMKDLWTKPNKVLYHMSAGVSQFRDRSIYNKALYARYGKPNSLDDYSLKAQLMDYEATRSEYEAYAAYKSHSNPTTGLIYWMLNPAWPNLHWALFDYYLKPMASYFGTKTGARIEHAIYDYREQAVYLINHSNSRSGARSVTVDLINIDGKSLSHSTMKADTTPLMSQKLSKVSGLDKNRDVSFLRLILKDDAGKVLSRNVYWLPQREDVLDWGNSTWYHTPVTEYADLTPLSKLRKADVRVDINIQGRTKTRVSLQNKSNHPAFFIRLNLLDKASGDEVTPVFWEDNYVTLWPHERIELGVTYPQTHRVELEVSGYNVEKKMV</sequence>
<name>EBDG_ARTBC</name>
<feature type="signal peptide" evidence="3">
    <location>
        <begin position="1"/>
        <end position="21"/>
    </location>
</feature>
<feature type="propeptide" id="PRO_0000434659" evidence="1">
    <location>
        <begin position="22"/>
        <end position="31"/>
    </location>
</feature>
<feature type="chain" id="PRO_0000434660" description="Exo-beta-D-glucosaminidase ARB_07888" evidence="3">
    <location>
        <begin position="32"/>
        <end position="882"/>
    </location>
</feature>
<feature type="active site" description="Proton donor" evidence="2">
    <location>
        <position position="466"/>
    </location>
</feature>
<feature type="active site" description="Nucleophile" evidence="2">
    <location>
        <position position="538"/>
    </location>
</feature>
<feature type="glycosylation site" description="N-linked (GlcNAc...) asparagine" evidence="4">
    <location>
        <position position="86"/>
    </location>
</feature>
<feature type="glycosylation site" description="N-linked (GlcNAc...) asparagine" evidence="4">
    <location>
        <position position="200"/>
    </location>
</feature>
<feature type="glycosylation site" description="N-linked (GlcNAc...) asparagine" evidence="4">
    <location>
        <position position="234"/>
    </location>
</feature>
<feature type="glycosylation site" description="N-linked (GlcNAc...) asparagine" evidence="4">
    <location>
        <position position="237"/>
    </location>
</feature>
<feature type="glycosylation site" description="N-linked (GlcNAc...) asparagine" evidence="4">
    <location>
        <position position="287"/>
    </location>
</feature>
<feature type="glycosylation site" description="N-linked (GlcNAc...) asparagine" evidence="4">
    <location>
        <position position="442"/>
    </location>
</feature>
<feature type="glycosylation site" description="N-linked (GlcNAc...) asparagine" evidence="4">
    <location>
        <position position="688"/>
    </location>
</feature>
<feature type="glycosylation site" description="N-linked (GlcNAc...) asparagine" evidence="4">
    <location>
        <position position="773"/>
    </location>
</feature>
<feature type="glycosylation site" description="N-linked (GlcNAc...) asparagine" evidence="4">
    <location>
        <position position="816"/>
    </location>
</feature>
<comment type="function">
    <text evidence="1">Hydrolyzes chitosan and chitooligosaccharides with retention of anomeric configuration (By similarity).</text>
</comment>
<comment type="catalytic activity">
    <reaction evidence="1">
        <text>Hydrolysis of chitosan or chitosan oligosaccharides to remove successive D-glucosamine residues from the non-reducing termini.</text>
        <dbReference type="EC" id="3.2.1.165"/>
    </reaction>
</comment>
<comment type="subunit">
    <text evidence="1">Monomer.</text>
</comment>
<comment type="subcellular location">
    <subcellularLocation>
        <location evidence="5">Secreted</location>
    </subcellularLocation>
</comment>
<comment type="similarity">
    <text evidence="6">Belongs to the glycosyl hydrolase 2 family.</text>
</comment>
<keyword id="KW-0119">Carbohydrate metabolism</keyword>
<keyword id="KW-0146">Chitin degradation</keyword>
<keyword id="KW-0325">Glycoprotein</keyword>
<keyword id="KW-0326">Glycosidase</keyword>
<keyword id="KW-0378">Hydrolase</keyword>
<keyword id="KW-0624">Polysaccharide degradation</keyword>
<keyword id="KW-1185">Reference proteome</keyword>
<keyword id="KW-0964">Secreted</keyword>
<keyword id="KW-0732">Signal</keyword>
<gene>
    <name type="ORF">ARB_07888</name>
</gene>
<reference key="1">
    <citation type="journal article" date="2011" name="Genome Biol.">
        <title>Comparative and functional genomics provide insights into the pathogenicity of dermatophytic fungi.</title>
        <authorList>
            <person name="Burmester A."/>
            <person name="Shelest E."/>
            <person name="Gloeckner G."/>
            <person name="Heddergott C."/>
            <person name="Schindler S."/>
            <person name="Staib P."/>
            <person name="Heidel A."/>
            <person name="Felder M."/>
            <person name="Petzold A."/>
            <person name="Szafranski K."/>
            <person name="Feuermann M."/>
            <person name="Pedruzzi I."/>
            <person name="Priebe S."/>
            <person name="Groth M."/>
            <person name="Winkler R."/>
            <person name="Li W."/>
            <person name="Kniemeyer O."/>
            <person name="Schroeckh V."/>
            <person name="Hertweck C."/>
            <person name="Hube B."/>
            <person name="White T.C."/>
            <person name="Platzer M."/>
            <person name="Guthke R."/>
            <person name="Heitman J."/>
            <person name="Woestemeyer J."/>
            <person name="Zipfel P.F."/>
            <person name="Monod M."/>
            <person name="Brakhage A.A."/>
        </authorList>
    </citation>
    <scope>NUCLEOTIDE SEQUENCE [LARGE SCALE GENOMIC DNA]</scope>
    <source>
        <strain>ATCC MYA-4681 / CBS 112371</strain>
    </source>
</reference>
<reference key="2">
    <citation type="journal article" date="2011" name="Proteomics">
        <title>Identification of novel secreted proteases during extracellular proteolysis by dermatophytes at acidic pH.</title>
        <authorList>
            <person name="Sriranganadane D."/>
            <person name="Waridel P."/>
            <person name="Salamin K."/>
            <person name="Feuermann M."/>
            <person name="Mignon B."/>
            <person name="Staib P."/>
            <person name="Neuhaus J.M."/>
            <person name="Quadroni M."/>
            <person name="Monod M."/>
        </authorList>
    </citation>
    <scope>IDENTIFICATION BY MASS SPECTROMETRY</scope>
    <scope>SUBCELLULAR LOCATION</scope>
</reference>
<evidence type="ECO:0000250" key="1">
    <source>
        <dbReference type="UniProtKB" id="Q4R1C4"/>
    </source>
</evidence>
<evidence type="ECO:0000250" key="2">
    <source>
        <dbReference type="UniProtKB" id="Q56F26"/>
    </source>
</evidence>
<evidence type="ECO:0000255" key="3"/>
<evidence type="ECO:0000255" key="4">
    <source>
        <dbReference type="PROSITE-ProRule" id="PRU00498"/>
    </source>
</evidence>
<evidence type="ECO:0000269" key="5">
    <source>
    </source>
</evidence>
<evidence type="ECO:0000305" key="6"/>
<accession>D4AUH1</accession>
<dbReference type="EC" id="3.2.1.165" evidence="1"/>
<dbReference type="EMBL" id="ABSU01000011">
    <property type="protein sequence ID" value="EFE33136.1"/>
    <property type="molecule type" value="Genomic_DNA"/>
</dbReference>
<dbReference type="RefSeq" id="XP_003013776.1">
    <property type="nucleotide sequence ID" value="XM_003013730.1"/>
</dbReference>
<dbReference type="SMR" id="D4AUH1"/>
<dbReference type="STRING" id="663331.D4AUH1"/>
<dbReference type="GeneID" id="9526967"/>
<dbReference type="KEGG" id="abe:ARB_07888"/>
<dbReference type="eggNOG" id="KOG2230">
    <property type="taxonomic scope" value="Eukaryota"/>
</dbReference>
<dbReference type="HOGENOM" id="CLU_005015_2_4_1"/>
<dbReference type="OMA" id="AWPNLHW"/>
<dbReference type="OrthoDB" id="408532at2759"/>
<dbReference type="Proteomes" id="UP000008866">
    <property type="component" value="Unassembled WGS sequence"/>
</dbReference>
<dbReference type="GO" id="GO:0005576">
    <property type="term" value="C:extracellular region"/>
    <property type="evidence" value="ECO:0007669"/>
    <property type="project" value="UniProtKB-SubCell"/>
</dbReference>
<dbReference type="GO" id="GO:0052761">
    <property type="term" value="F:exo-1,4-beta-D-glucosaminidase activity"/>
    <property type="evidence" value="ECO:0007669"/>
    <property type="project" value="UniProtKB-EC"/>
</dbReference>
<dbReference type="GO" id="GO:0006032">
    <property type="term" value="P:chitin catabolic process"/>
    <property type="evidence" value="ECO:0007669"/>
    <property type="project" value="UniProtKB-KW"/>
</dbReference>
<dbReference type="GO" id="GO:0000272">
    <property type="term" value="P:polysaccharide catabolic process"/>
    <property type="evidence" value="ECO:0007669"/>
    <property type="project" value="UniProtKB-KW"/>
</dbReference>
<dbReference type="Gene3D" id="2.60.120.260">
    <property type="entry name" value="Galactose-binding domain-like"/>
    <property type="match status" value="1"/>
</dbReference>
<dbReference type="Gene3D" id="3.20.20.80">
    <property type="entry name" value="Glycosidases"/>
    <property type="match status" value="1"/>
</dbReference>
<dbReference type="Gene3D" id="2.60.40.10">
    <property type="entry name" value="Immunoglobulins"/>
    <property type="match status" value="3"/>
</dbReference>
<dbReference type="InterPro" id="IPR036156">
    <property type="entry name" value="Beta-gal/glucu_dom_sf"/>
</dbReference>
<dbReference type="InterPro" id="IPR054593">
    <property type="entry name" value="Beta-mannosidase-like_N2"/>
</dbReference>
<dbReference type="InterPro" id="IPR043534">
    <property type="entry name" value="EBDG/EBM"/>
</dbReference>
<dbReference type="InterPro" id="IPR008979">
    <property type="entry name" value="Galactose-bd-like_sf"/>
</dbReference>
<dbReference type="InterPro" id="IPR006102">
    <property type="entry name" value="Glyco_hydro_2_Ig-like"/>
</dbReference>
<dbReference type="InterPro" id="IPR017853">
    <property type="entry name" value="Glycoside_hydrolase_SF"/>
</dbReference>
<dbReference type="InterPro" id="IPR013783">
    <property type="entry name" value="Ig-like_fold"/>
</dbReference>
<dbReference type="InterPro" id="IPR041351">
    <property type="entry name" value="Ig_GlcNase"/>
</dbReference>
<dbReference type="InterPro" id="IPR041447">
    <property type="entry name" value="Mannosidase_ig"/>
</dbReference>
<dbReference type="PANTHER" id="PTHR43536">
    <property type="entry name" value="MANNOSYLGLYCOPROTEIN ENDO-BETA-MANNOSIDASE"/>
    <property type="match status" value="1"/>
</dbReference>
<dbReference type="PANTHER" id="PTHR43536:SF1">
    <property type="entry name" value="MANNOSYLGLYCOPROTEIN ENDO-BETA-MANNOSIDASE"/>
    <property type="match status" value="1"/>
</dbReference>
<dbReference type="Pfam" id="PF00703">
    <property type="entry name" value="Glyco_hydro_2"/>
    <property type="match status" value="1"/>
</dbReference>
<dbReference type="Pfam" id="PF22666">
    <property type="entry name" value="Glyco_hydro_2_N2"/>
    <property type="match status" value="1"/>
</dbReference>
<dbReference type="Pfam" id="PF18368">
    <property type="entry name" value="Ig_GlcNase"/>
    <property type="match status" value="1"/>
</dbReference>
<dbReference type="Pfam" id="PF17786">
    <property type="entry name" value="Mannosidase_ig"/>
    <property type="match status" value="1"/>
</dbReference>
<dbReference type="SUPFAM" id="SSF51445">
    <property type="entry name" value="(Trans)glycosidases"/>
    <property type="match status" value="1"/>
</dbReference>
<dbReference type="SUPFAM" id="SSF49303">
    <property type="entry name" value="beta-Galactosidase/glucuronidase domain"/>
    <property type="match status" value="3"/>
</dbReference>
<dbReference type="SUPFAM" id="SSF49785">
    <property type="entry name" value="Galactose-binding domain-like"/>
    <property type="match status" value="1"/>
</dbReference>